<gene>
    <name type="ordered locus">RT0729</name>
</gene>
<dbReference type="EC" id="3.1.-.-"/>
<dbReference type="EMBL" id="AE017197">
    <property type="protein sequence ID" value="AAU04186.1"/>
    <property type="molecule type" value="Genomic_DNA"/>
</dbReference>
<dbReference type="RefSeq" id="WP_011191162.1">
    <property type="nucleotide sequence ID" value="NC_006142.1"/>
</dbReference>
<dbReference type="SMR" id="Q68W06"/>
<dbReference type="ESTHER" id="ricty-q68w06">
    <property type="family name" value="LYsophospholipase_carboxylesterase"/>
</dbReference>
<dbReference type="KEGG" id="rty:RT0729"/>
<dbReference type="eggNOG" id="COG0400">
    <property type="taxonomic scope" value="Bacteria"/>
</dbReference>
<dbReference type="HOGENOM" id="CLU_049413_5_2_5"/>
<dbReference type="OrthoDB" id="9801763at2"/>
<dbReference type="Proteomes" id="UP000000604">
    <property type="component" value="Chromosome"/>
</dbReference>
<dbReference type="GO" id="GO:0016787">
    <property type="term" value="F:hydrolase activity"/>
    <property type="evidence" value="ECO:0007669"/>
    <property type="project" value="UniProtKB-KW"/>
</dbReference>
<dbReference type="Gene3D" id="3.40.50.1820">
    <property type="entry name" value="alpha/beta hydrolase"/>
    <property type="match status" value="1"/>
</dbReference>
<dbReference type="InterPro" id="IPR029058">
    <property type="entry name" value="AB_hydrolase_fold"/>
</dbReference>
<dbReference type="InterPro" id="IPR050565">
    <property type="entry name" value="LYPA1-2/EST-like"/>
</dbReference>
<dbReference type="InterPro" id="IPR003140">
    <property type="entry name" value="PLipase/COase/thioEstase"/>
</dbReference>
<dbReference type="PANTHER" id="PTHR10655:SF17">
    <property type="entry name" value="LYSOPHOSPHOLIPASE-LIKE PROTEIN 1"/>
    <property type="match status" value="1"/>
</dbReference>
<dbReference type="PANTHER" id="PTHR10655">
    <property type="entry name" value="LYSOPHOSPHOLIPASE-RELATED"/>
    <property type="match status" value="1"/>
</dbReference>
<dbReference type="Pfam" id="PF02230">
    <property type="entry name" value="Abhydrolase_2"/>
    <property type="match status" value="1"/>
</dbReference>
<dbReference type="SUPFAM" id="SSF53474">
    <property type="entry name" value="alpha/beta-Hydrolases"/>
    <property type="match status" value="1"/>
</dbReference>
<name>Y729_RICTY</name>
<comment type="similarity">
    <text evidence="2">Belongs to the AB hydrolase superfamily. AB hydrolase 2 family.</text>
</comment>
<reference key="1">
    <citation type="journal article" date="2004" name="J. Bacteriol.">
        <title>Complete genome sequence of Rickettsia typhi and comparison with sequences of other Rickettsiae.</title>
        <authorList>
            <person name="McLeod M.P."/>
            <person name="Qin X."/>
            <person name="Karpathy S.E."/>
            <person name="Gioia J."/>
            <person name="Highlander S.K."/>
            <person name="Fox G.E."/>
            <person name="McNeill T.Z."/>
            <person name="Jiang H."/>
            <person name="Muzny D."/>
            <person name="Jacob L.S."/>
            <person name="Hawes A.C."/>
            <person name="Sodergren E."/>
            <person name="Gill R."/>
            <person name="Hume J."/>
            <person name="Morgan M."/>
            <person name="Fan G."/>
            <person name="Amin A.G."/>
            <person name="Gibbs R.A."/>
            <person name="Hong C."/>
            <person name="Yu X.-J."/>
            <person name="Walker D.H."/>
            <person name="Weinstock G.M."/>
        </authorList>
    </citation>
    <scope>NUCLEOTIDE SEQUENCE [LARGE SCALE GENOMIC DNA]</scope>
    <source>
        <strain>ATCC VR-144 / Wilmington</strain>
    </source>
</reference>
<organism>
    <name type="scientific">Rickettsia typhi (strain ATCC VR-144 / Wilmington)</name>
    <dbReference type="NCBI Taxonomy" id="257363"/>
    <lineage>
        <taxon>Bacteria</taxon>
        <taxon>Pseudomonadati</taxon>
        <taxon>Pseudomonadota</taxon>
        <taxon>Alphaproteobacteria</taxon>
        <taxon>Rickettsiales</taxon>
        <taxon>Rickettsiaceae</taxon>
        <taxon>Rickettsieae</taxon>
        <taxon>Rickettsia</taxon>
        <taxon>typhus group</taxon>
    </lineage>
</organism>
<feature type="chain" id="PRO_0000272340" description="Uncharacterized hydrolase RT0729">
    <location>
        <begin position="1"/>
        <end position="215"/>
    </location>
</feature>
<feature type="active site" description="Charge relay system" evidence="1">
    <location>
        <position position="114"/>
    </location>
</feature>
<feature type="active site" description="Charge relay system" evidence="1">
    <location>
        <position position="162"/>
    </location>
</feature>
<feature type="active site" description="Charge relay system" evidence="1">
    <location>
        <position position="194"/>
    </location>
</feature>
<keyword id="KW-0378">Hydrolase</keyword>
<protein>
    <recommendedName>
        <fullName>Uncharacterized hydrolase RT0729</fullName>
        <ecNumber>3.1.-.-</ecNumber>
    </recommendedName>
</protein>
<proteinExistence type="inferred from homology"/>
<accession>Q68W06</accession>
<evidence type="ECO:0000250" key="1"/>
<evidence type="ECO:0000305" key="2"/>
<sequence>MNKYLEYPEVESKETPPQKLVVLLHGIGSDGHDLIGLVPYIKNDLQNCHFISPHGIEDYDMMPYGRQWFSLRDRSPHIIATLIANNISKLEDIIREKQTELNLTNKDTVIIGFSQGTMIGLYLTLVQQAPFFCTIGFAGALIPPMKINNKLTPICLIHGALDQVIDVSEMYNASNYLSKLNIEHSVHKLTSLAHSIDGRGLEIAINFINTCHNMV</sequence>